<proteinExistence type="evidence at transcript level"/>
<keyword id="KW-0025">Alternative splicing</keyword>
<keyword id="KW-0325">Glycoprotein</keyword>
<keyword id="KW-0472">Membrane</keyword>
<keyword id="KW-1185">Reference proteome</keyword>
<keyword id="KW-0812">Transmembrane</keyword>
<keyword id="KW-1133">Transmembrane helix</keyword>
<name>LYSM4_MOUSE</name>
<reference key="1">
    <citation type="journal article" date="2005" name="Science">
        <title>The transcriptional landscape of the mammalian genome.</title>
        <authorList>
            <person name="Carninci P."/>
            <person name="Kasukawa T."/>
            <person name="Katayama S."/>
            <person name="Gough J."/>
            <person name="Frith M.C."/>
            <person name="Maeda N."/>
            <person name="Oyama R."/>
            <person name="Ravasi T."/>
            <person name="Lenhard B."/>
            <person name="Wells C."/>
            <person name="Kodzius R."/>
            <person name="Shimokawa K."/>
            <person name="Bajic V.B."/>
            <person name="Brenner S.E."/>
            <person name="Batalov S."/>
            <person name="Forrest A.R."/>
            <person name="Zavolan M."/>
            <person name="Davis M.J."/>
            <person name="Wilming L.G."/>
            <person name="Aidinis V."/>
            <person name="Allen J.E."/>
            <person name="Ambesi-Impiombato A."/>
            <person name="Apweiler R."/>
            <person name="Aturaliya R.N."/>
            <person name="Bailey T.L."/>
            <person name="Bansal M."/>
            <person name="Baxter L."/>
            <person name="Beisel K.W."/>
            <person name="Bersano T."/>
            <person name="Bono H."/>
            <person name="Chalk A.M."/>
            <person name="Chiu K.P."/>
            <person name="Choudhary V."/>
            <person name="Christoffels A."/>
            <person name="Clutterbuck D.R."/>
            <person name="Crowe M.L."/>
            <person name="Dalla E."/>
            <person name="Dalrymple B.P."/>
            <person name="de Bono B."/>
            <person name="Della Gatta G."/>
            <person name="di Bernardo D."/>
            <person name="Down T."/>
            <person name="Engstrom P."/>
            <person name="Fagiolini M."/>
            <person name="Faulkner G."/>
            <person name="Fletcher C.F."/>
            <person name="Fukushima T."/>
            <person name="Furuno M."/>
            <person name="Futaki S."/>
            <person name="Gariboldi M."/>
            <person name="Georgii-Hemming P."/>
            <person name="Gingeras T.R."/>
            <person name="Gojobori T."/>
            <person name="Green R.E."/>
            <person name="Gustincich S."/>
            <person name="Harbers M."/>
            <person name="Hayashi Y."/>
            <person name="Hensch T.K."/>
            <person name="Hirokawa N."/>
            <person name="Hill D."/>
            <person name="Huminiecki L."/>
            <person name="Iacono M."/>
            <person name="Ikeo K."/>
            <person name="Iwama A."/>
            <person name="Ishikawa T."/>
            <person name="Jakt M."/>
            <person name="Kanapin A."/>
            <person name="Katoh M."/>
            <person name="Kawasawa Y."/>
            <person name="Kelso J."/>
            <person name="Kitamura H."/>
            <person name="Kitano H."/>
            <person name="Kollias G."/>
            <person name="Krishnan S.P."/>
            <person name="Kruger A."/>
            <person name="Kummerfeld S.K."/>
            <person name="Kurochkin I.V."/>
            <person name="Lareau L.F."/>
            <person name="Lazarevic D."/>
            <person name="Lipovich L."/>
            <person name="Liu J."/>
            <person name="Liuni S."/>
            <person name="McWilliam S."/>
            <person name="Madan Babu M."/>
            <person name="Madera M."/>
            <person name="Marchionni L."/>
            <person name="Matsuda H."/>
            <person name="Matsuzawa S."/>
            <person name="Miki H."/>
            <person name="Mignone F."/>
            <person name="Miyake S."/>
            <person name="Morris K."/>
            <person name="Mottagui-Tabar S."/>
            <person name="Mulder N."/>
            <person name="Nakano N."/>
            <person name="Nakauchi H."/>
            <person name="Ng P."/>
            <person name="Nilsson R."/>
            <person name="Nishiguchi S."/>
            <person name="Nishikawa S."/>
            <person name="Nori F."/>
            <person name="Ohara O."/>
            <person name="Okazaki Y."/>
            <person name="Orlando V."/>
            <person name="Pang K.C."/>
            <person name="Pavan W.J."/>
            <person name="Pavesi G."/>
            <person name="Pesole G."/>
            <person name="Petrovsky N."/>
            <person name="Piazza S."/>
            <person name="Reed J."/>
            <person name="Reid J.F."/>
            <person name="Ring B.Z."/>
            <person name="Ringwald M."/>
            <person name="Rost B."/>
            <person name="Ruan Y."/>
            <person name="Salzberg S.L."/>
            <person name="Sandelin A."/>
            <person name="Schneider C."/>
            <person name="Schoenbach C."/>
            <person name="Sekiguchi K."/>
            <person name="Semple C.A."/>
            <person name="Seno S."/>
            <person name="Sessa L."/>
            <person name="Sheng Y."/>
            <person name="Shibata Y."/>
            <person name="Shimada H."/>
            <person name="Shimada K."/>
            <person name="Silva D."/>
            <person name="Sinclair B."/>
            <person name="Sperling S."/>
            <person name="Stupka E."/>
            <person name="Sugiura K."/>
            <person name="Sultana R."/>
            <person name="Takenaka Y."/>
            <person name="Taki K."/>
            <person name="Tammoja K."/>
            <person name="Tan S.L."/>
            <person name="Tang S."/>
            <person name="Taylor M.S."/>
            <person name="Tegner J."/>
            <person name="Teichmann S.A."/>
            <person name="Ueda H.R."/>
            <person name="van Nimwegen E."/>
            <person name="Verardo R."/>
            <person name="Wei C.L."/>
            <person name="Yagi K."/>
            <person name="Yamanishi H."/>
            <person name="Zabarovsky E."/>
            <person name="Zhu S."/>
            <person name="Zimmer A."/>
            <person name="Hide W."/>
            <person name="Bult C."/>
            <person name="Grimmond S.M."/>
            <person name="Teasdale R.D."/>
            <person name="Liu E.T."/>
            <person name="Brusic V."/>
            <person name="Quackenbush J."/>
            <person name="Wahlestedt C."/>
            <person name="Mattick J.S."/>
            <person name="Hume D.A."/>
            <person name="Kai C."/>
            <person name="Sasaki D."/>
            <person name="Tomaru Y."/>
            <person name="Fukuda S."/>
            <person name="Kanamori-Katayama M."/>
            <person name="Suzuki M."/>
            <person name="Aoki J."/>
            <person name="Arakawa T."/>
            <person name="Iida J."/>
            <person name="Imamura K."/>
            <person name="Itoh M."/>
            <person name="Kato T."/>
            <person name="Kawaji H."/>
            <person name="Kawagashira N."/>
            <person name="Kawashima T."/>
            <person name="Kojima M."/>
            <person name="Kondo S."/>
            <person name="Konno H."/>
            <person name="Nakano K."/>
            <person name="Ninomiya N."/>
            <person name="Nishio T."/>
            <person name="Okada M."/>
            <person name="Plessy C."/>
            <person name="Shibata K."/>
            <person name="Shiraki T."/>
            <person name="Suzuki S."/>
            <person name="Tagami M."/>
            <person name="Waki K."/>
            <person name="Watahiki A."/>
            <person name="Okamura-Oho Y."/>
            <person name="Suzuki H."/>
            <person name="Kawai J."/>
            <person name="Hayashizaki Y."/>
        </authorList>
    </citation>
    <scope>NUCLEOTIDE SEQUENCE [LARGE SCALE MRNA] (ISOFORMS 1 AND 2)</scope>
    <source>
        <strain>C57BL/6J</strain>
        <tissue>Cecum</tissue>
        <tissue>Oviduct</tissue>
        <tissue>Spleen</tissue>
    </source>
</reference>
<reference key="2">
    <citation type="journal article" date="2004" name="Genome Res.">
        <title>The status, quality, and expansion of the NIH full-length cDNA project: the Mammalian Gene Collection (MGC).</title>
        <authorList>
            <consortium name="The MGC Project Team"/>
        </authorList>
    </citation>
    <scope>NUCLEOTIDE SEQUENCE [LARGE SCALE MRNA] (ISOFORM 2)</scope>
    <source>
        <strain>C57BL/6J</strain>
        <tissue>Retina</tissue>
    </source>
</reference>
<dbReference type="EMBL" id="AK033681">
    <property type="protein sequence ID" value="BAC28427.1"/>
    <property type="molecule type" value="mRNA"/>
</dbReference>
<dbReference type="EMBL" id="AK143241">
    <property type="protein sequence ID" value="BAE25322.1"/>
    <property type="molecule type" value="mRNA"/>
</dbReference>
<dbReference type="EMBL" id="AK172203">
    <property type="protein sequence ID" value="BAE42879.1"/>
    <property type="molecule type" value="mRNA"/>
</dbReference>
<dbReference type="EMBL" id="BC057459">
    <property type="protein sequence ID" value="AAH57459.1"/>
    <property type="molecule type" value="mRNA"/>
</dbReference>
<dbReference type="CCDS" id="CCDS21350.1">
    <molecule id="Q8CC84-1"/>
</dbReference>
<dbReference type="RefSeq" id="NP_001177980.1">
    <molecule id="Q8CC84-1"/>
    <property type="nucleotide sequence ID" value="NM_001191051.1"/>
</dbReference>
<dbReference type="RefSeq" id="NP_780424.1">
    <molecule id="Q8CC84-1"/>
    <property type="nucleotide sequence ID" value="NM_175215.4"/>
</dbReference>
<dbReference type="RefSeq" id="XP_006541300.1">
    <property type="nucleotide sequence ID" value="XM_006541237.2"/>
</dbReference>
<dbReference type="RefSeq" id="XP_030098905.1">
    <molecule id="Q8CC84-2"/>
    <property type="nucleotide sequence ID" value="XM_030243045.2"/>
</dbReference>
<dbReference type="SMR" id="Q8CC84"/>
<dbReference type="BioGRID" id="217219">
    <property type="interactions" value="1"/>
</dbReference>
<dbReference type="FunCoup" id="Q8CC84">
    <property type="interactions" value="27"/>
</dbReference>
<dbReference type="STRING" id="10090.ENSMUSP00000053341"/>
<dbReference type="GlyCosmos" id="Q8CC84">
    <property type="glycosylation" value="1 site, No reported glycans"/>
</dbReference>
<dbReference type="GlyGen" id="Q8CC84">
    <property type="glycosylation" value="1 site"/>
</dbReference>
<dbReference type="iPTMnet" id="Q8CC84"/>
<dbReference type="PhosphoSitePlus" id="Q8CC84"/>
<dbReference type="SwissPalm" id="Q8CC84"/>
<dbReference type="PaxDb" id="10090-ENSMUSP00000136151"/>
<dbReference type="ProteomicsDB" id="252694">
    <molecule id="Q8CC84-1"/>
</dbReference>
<dbReference type="Antibodypedia" id="29207">
    <property type="antibodies" value="94 antibodies from 15 providers"/>
</dbReference>
<dbReference type="DNASU" id="75099"/>
<dbReference type="Ensembl" id="ENSMUST00000058771.13">
    <molecule id="Q8CC84-1"/>
    <property type="protein sequence ID" value="ENSMUSP00000053341.6"/>
    <property type="gene ID" value="ENSMUSG00000043831.13"/>
</dbReference>
<dbReference type="Ensembl" id="ENSMUST00000208998.2">
    <molecule id="Q8CC84-1"/>
    <property type="protein sequence ID" value="ENSMUSP00000146557.2"/>
    <property type="gene ID" value="ENSMUSG00000043831.13"/>
</dbReference>
<dbReference type="GeneID" id="75099"/>
<dbReference type="KEGG" id="mmu:75099"/>
<dbReference type="UCSC" id="uc009hia.2">
    <molecule id="Q8CC84-1"/>
    <property type="organism name" value="mouse"/>
</dbReference>
<dbReference type="AGR" id="MGI:1922349"/>
<dbReference type="CTD" id="145748"/>
<dbReference type="MGI" id="MGI:1922349">
    <property type="gene designation" value="Lysmd4"/>
</dbReference>
<dbReference type="VEuPathDB" id="HostDB:ENSMUSG00000043831"/>
<dbReference type="eggNOG" id="KOG2850">
    <property type="taxonomic scope" value="Eukaryota"/>
</dbReference>
<dbReference type="GeneTree" id="ENSGT00940000160583"/>
<dbReference type="HOGENOM" id="CLU_070676_1_0_1"/>
<dbReference type="InParanoid" id="Q8CC84"/>
<dbReference type="OMA" id="ESYCVET"/>
<dbReference type="OrthoDB" id="538216at2759"/>
<dbReference type="PhylomeDB" id="Q8CC84"/>
<dbReference type="TreeFam" id="TF326271"/>
<dbReference type="BioGRID-ORCS" id="75099">
    <property type="hits" value="2 hits in 79 CRISPR screens"/>
</dbReference>
<dbReference type="PRO" id="PR:Q8CC84"/>
<dbReference type="Proteomes" id="UP000000589">
    <property type="component" value="Chromosome 7"/>
</dbReference>
<dbReference type="RNAct" id="Q8CC84">
    <property type="molecule type" value="protein"/>
</dbReference>
<dbReference type="Bgee" id="ENSMUSG00000043831">
    <property type="expression patterns" value="Expressed in facial nucleus and 229 other cell types or tissues"/>
</dbReference>
<dbReference type="ExpressionAtlas" id="Q8CC84">
    <property type="expression patterns" value="baseline and differential"/>
</dbReference>
<dbReference type="GO" id="GO:0016020">
    <property type="term" value="C:membrane"/>
    <property type="evidence" value="ECO:0007669"/>
    <property type="project" value="UniProtKB-SubCell"/>
</dbReference>
<dbReference type="CDD" id="cd00118">
    <property type="entry name" value="LysM"/>
    <property type="match status" value="1"/>
</dbReference>
<dbReference type="Gene3D" id="3.10.350.10">
    <property type="entry name" value="LysM domain"/>
    <property type="match status" value="1"/>
</dbReference>
<dbReference type="InterPro" id="IPR045030">
    <property type="entry name" value="LYSM1-4"/>
</dbReference>
<dbReference type="InterPro" id="IPR018392">
    <property type="entry name" value="LysM_dom"/>
</dbReference>
<dbReference type="InterPro" id="IPR036779">
    <property type="entry name" value="LysM_dom_sf"/>
</dbReference>
<dbReference type="PANTHER" id="PTHR20932:SF7">
    <property type="entry name" value="AND PUTATIVE PEPTIDOGLYCAN-BINDING DOMAIN-CONTAINING PROTEIN 4-RELATED"/>
    <property type="match status" value="1"/>
</dbReference>
<dbReference type="PANTHER" id="PTHR20932">
    <property type="entry name" value="LYSM AND PUTATIVE PEPTIDOGLYCAN-BINDING DOMAIN-CONTAINING PROTEIN"/>
    <property type="match status" value="1"/>
</dbReference>
<dbReference type="Pfam" id="PF01476">
    <property type="entry name" value="LysM"/>
    <property type="match status" value="1"/>
</dbReference>
<dbReference type="SMART" id="SM00257">
    <property type="entry name" value="LysM"/>
    <property type="match status" value="1"/>
</dbReference>
<dbReference type="PROSITE" id="PS51782">
    <property type="entry name" value="LYSM"/>
    <property type="match status" value="1"/>
</dbReference>
<gene>
    <name type="primary">Lysmd4</name>
</gene>
<sequence>MRQKEVLAKSFQGPAAVCRTPNSHVYMFNNGSGDSGDSSEEESHQVVLRPRGKEHQKNSSQRPGAGTMVLLQRELAQEDSLNKLALQYGCKVADIKKANNFIREQDLYALKSIKIPVRNHGILTETHQELMPLGASSSETRVTLVDLPEDEDAGGATTQGNQLTDFFKGIDENIERAVHSDVFHGDSCCVEAPDQLLLPITQKPVADGADCGIQWWNAVFLMLLIGIVLPVFYLVYFKIQATGEPSNGLNATVVPNGSMTLSPVPGQAPRLAIPVPTLPASDSQVSPTTQAGA</sequence>
<protein>
    <recommendedName>
        <fullName>LysM and putative peptidoglycan-binding domain-containing protein 4</fullName>
    </recommendedName>
</protein>
<feature type="chain" id="PRO_0000248014" description="LysM and putative peptidoglycan-binding domain-containing protein 4">
    <location>
        <begin position="1"/>
        <end position="293"/>
    </location>
</feature>
<feature type="topological domain" description="Extracellular" evidence="1">
    <location>
        <begin position="1"/>
        <end position="214"/>
    </location>
</feature>
<feature type="transmembrane region" description="Helical" evidence="1">
    <location>
        <begin position="215"/>
        <end position="235"/>
    </location>
</feature>
<feature type="topological domain" description="Cytoplasmic" evidence="1">
    <location>
        <begin position="236"/>
        <end position="293"/>
    </location>
</feature>
<feature type="domain" description="LysM" evidence="2">
    <location>
        <begin position="71"/>
        <end position="115"/>
    </location>
</feature>
<feature type="region of interest" description="Disordered" evidence="3">
    <location>
        <begin position="28"/>
        <end position="65"/>
    </location>
</feature>
<feature type="glycosylation site" description="N-linked (GlcNAc...) asparagine" evidence="1">
    <location>
        <position position="30"/>
    </location>
</feature>
<feature type="splice variant" id="VSP_020129" description="In isoform 2." evidence="4 5">
    <location>
        <begin position="1"/>
        <end position="130"/>
    </location>
</feature>
<evidence type="ECO:0000255" key="1"/>
<evidence type="ECO:0000255" key="2">
    <source>
        <dbReference type="PROSITE-ProRule" id="PRU01118"/>
    </source>
</evidence>
<evidence type="ECO:0000256" key="3">
    <source>
        <dbReference type="SAM" id="MobiDB-lite"/>
    </source>
</evidence>
<evidence type="ECO:0000303" key="4">
    <source>
    </source>
</evidence>
<evidence type="ECO:0000303" key="5">
    <source>
    </source>
</evidence>
<evidence type="ECO:0000305" key="6"/>
<comment type="subcellular location">
    <subcellularLocation>
        <location evidence="6">Membrane</location>
        <topology evidence="6">Single-pass membrane protein</topology>
    </subcellularLocation>
</comment>
<comment type="alternative products">
    <event type="alternative splicing"/>
    <isoform>
        <id>Q8CC84-1</id>
        <name>1</name>
        <sequence type="displayed"/>
    </isoform>
    <isoform>
        <id>Q8CC84-2</id>
        <name>2</name>
        <sequence type="described" ref="VSP_020129"/>
    </isoform>
</comment>
<accession>Q8CC84</accession>
<accession>Q6PFQ8</accession>
<organism>
    <name type="scientific">Mus musculus</name>
    <name type="common">Mouse</name>
    <dbReference type="NCBI Taxonomy" id="10090"/>
    <lineage>
        <taxon>Eukaryota</taxon>
        <taxon>Metazoa</taxon>
        <taxon>Chordata</taxon>
        <taxon>Craniata</taxon>
        <taxon>Vertebrata</taxon>
        <taxon>Euteleostomi</taxon>
        <taxon>Mammalia</taxon>
        <taxon>Eutheria</taxon>
        <taxon>Euarchontoglires</taxon>
        <taxon>Glires</taxon>
        <taxon>Rodentia</taxon>
        <taxon>Myomorpha</taxon>
        <taxon>Muroidea</taxon>
        <taxon>Muridae</taxon>
        <taxon>Murinae</taxon>
        <taxon>Mus</taxon>
        <taxon>Mus</taxon>
    </lineage>
</organism>